<feature type="chain" id="PRO_0000370926" description="ATP synthase subunit delta">
    <location>
        <begin position="1"/>
        <end position="179"/>
    </location>
</feature>
<comment type="function">
    <text evidence="1">F(1)F(0) ATP synthase produces ATP from ADP in the presence of a proton or sodium gradient. F-type ATPases consist of two structural domains, F(1) containing the extramembraneous catalytic core and F(0) containing the membrane proton channel, linked together by a central stalk and a peripheral stalk. During catalysis, ATP synthesis in the catalytic domain of F(1) is coupled via a rotary mechanism of the central stalk subunits to proton translocation.</text>
</comment>
<comment type="function">
    <text evidence="1">This protein is part of the stalk that links CF(0) to CF(1). It either transmits conformational changes from CF(0) to CF(1) or is implicated in proton conduction.</text>
</comment>
<comment type="subunit">
    <text evidence="1">F-type ATPases have 2 components, F(1) - the catalytic core - and F(0) - the membrane proton channel. F(1) has five subunits: alpha(3), beta(3), gamma(1), delta(1), epsilon(1). F(0) has three main subunits: a(1), b(2) and c(10-14). The alpha and beta chains form an alternating ring which encloses part of the gamma chain. F(1) is attached to F(0) by a central stalk formed by the gamma and epsilon chains, while a peripheral stalk is formed by the delta and b chains.</text>
</comment>
<comment type="subcellular location">
    <subcellularLocation>
        <location evidence="1">Cell inner membrane</location>
        <topology evidence="1">Peripheral membrane protein</topology>
    </subcellularLocation>
</comment>
<comment type="similarity">
    <text evidence="1">Belongs to the ATPase delta chain family.</text>
</comment>
<dbReference type="EMBL" id="CP000572">
    <property type="protein sequence ID" value="ABN88861.1"/>
    <property type="molecule type" value="Genomic_DNA"/>
</dbReference>
<dbReference type="RefSeq" id="WP_004195829.1">
    <property type="nucleotide sequence ID" value="NC_009076.1"/>
</dbReference>
<dbReference type="SMR" id="A3P0Z3"/>
<dbReference type="KEGG" id="bpl:BURPS1106A_4045"/>
<dbReference type="HOGENOM" id="CLU_085114_3_0_4"/>
<dbReference type="Proteomes" id="UP000006738">
    <property type="component" value="Chromosome I"/>
</dbReference>
<dbReference type="GO" id="GO:0005886">
    <property type="term" value="C:plasma membrane"/>
    <property type="evidence" value="ECO:0007669"/>
    <property type="project" value="UniProtKB-SubCell"/>
</dbReference>
<dbReference type="GO" id="GO:0045259">
    <property type="term" value="C:proton-transporting ATP synthase complex"/>
    <property type="evidence" value="ECO:0007669"/>
    <property type="project" value="UniProtKB-KW"/>
</dbReference>
<dbReference type="GO" id="GO:0046933">
    <property type="term" value="F:proton-transporting ATP synthase activity, rotational mechanism"/>
    <property type="evidence" value="ECO:0007669"/>
    <property type="project" value="UniProtKB-UniRule"/>
</dbReference>
<dbReference type="Gene3D" id="1.10.520.20">
    <property type="entry name" value="N-terminal domain of the delta subunit of the F1F0-ATP synthase"/>
    <property type="match status" value="1"/>
</dbReference>
<dbReference type="HAMAP" id="MF_01416">
    <property type="entry name" value="ATP_synth_delta_bact"/>
    <property type="match status" value="1"/>
</dbReference>
<dbReference type="InterPro" id="IPR026015">
    <property type="entry name" value="ATP_synth_OSCP/delta_N_sf"/>
</dbReference>
<dbReference type="InterPro" id="IPR000711">
    <property type="entry name" value="ATPase_OSCP/dsu"/>
</dbReference>
<dbReference type="NCBIfam" id="TIGR01145">
    <property type="entry name" value="ATP_synt_delta"/>
    <property type="match status" value="1"/>
</dbReference>
<dbReference type="NCBIfam" id="NF004402">
    <property type="entry name" value="PRK05758.2-2"/>
    <property type="match status" value="1"/>
</dbReference>
<dbReference type="PANTHER" id="PTHR11910">
    <property type="entry name" value="ATP SYNTHASE DELTA CHAIN"/>
    <property type="match status" value="1"/>
</dbReference>
<dbReference type="Pfam" id="PF00213">
    <property type="entry name" value="OSCP"/>
    <property type="match status" value="1"/>
</dbReference>
<dbReference type="PRINTS" id="PR00125">
    <property type="entry name" value="ATPASEDELTA"/>
</dbReference>
<dbReference type="SUPFAM" id="SSF47928">
    <property type="entry name" value="N-terminal domain of the delta subunit of the F1F0-ATP synthase"/>
    <property type="match status" value="1"/>
</dbReference>
<proteinExistence type="inferred from homology"/>
<sequence length="179" mass="18957">MAELATIARPYAEALFRVAEGGDISAWSTLVQELAQVAQLPEVLSVASSPKVSRTQVAELLLAALKSPLASGAQAKNFVQMLVDNHRIALLPEIAVQFEALKNAREGAADVQIVSAFPLEGAQLAELVTSLERKFKRKLKPAVEVDSSLIGGVRVTVGDEVLDTSVRARLAGMQAALTA</sequence>
<name>ATPD_BURP0</name>
<evidence type="ECO:0000255" key="1">
    <source>
        <dbReference type="HAMAP-Rule" id="MF_01416"/>
    </source>
</evidence>
<organism>
    <name type="scientific">Burkholderia pseudomallei (strain 1106a)</name>
    <dbReference type="NCBI Taxonomy" id="357348"/>
    <lineage>
        <taxon>Bacteria</taxon>
        <taxon>Pseudomonadati</taxon>
        <taxon>Pseudomonadota</taxon>
        <taxon>Betaproteobacteria</taxon>
        <taxon>Burkholderiales</taxon>
        <taxon>Burkholderiaceae</taxon>
        <taxon>Burkholderia</taxon>
        <taxon>pseudomallei group</taxon>
    </lineage>
</organism>
<accession>A3P0Z3</accession>
<reference key="1">
    <citation type="journal article" date="2010" name="Genome Biol. Evol.">
        <title>Continuing evolution of Burkholderia mallei through genome reduction and large-scale rearrangements.</title>
        <authorList>
            <person name="Losada L."/>
            <person name="Ronning C.M."/>
            <person name="DeShazer D."/>
            <person name="Woods D."/>
            <person name="Fedorova N."/>
            <person name="Kim H.S."/>
            <person name="Shabalina S.A."/>
            <person name="Pearson T.R."/>
            <person name="Brinkac L."/>
            <person name="Tan P."/>
            <person name="Nandi T."/>
            <person name="Crabtree J."/>
            <person name="Badger J."/>
            <person name="Beckstrom-Sternberg S."/>
            <person name="Saqib M."/>
            <person name="Schutzer S.E."/>
            <person name="Keim P."/>
            <person name="Nierman W.C."/>
        </authorList>
    </citation>
    <scope>NUCLEOTIDE SEQUENCE [LARGE SCALE GENOMIC DNA]</scope>
    <source>
        <strain>1106a</strain>
    </source>
</reference>
<gene>
    <name evidence="1" type="primary">atpH</name>
    <name type="ordered locus">BURPS1106A_4045</name>
</gene>
<keyword id="KW-0066">ATP synthesis</keyword>
<keyword id="KW-0997">Cell inner membrane</keyword>
<keyword id="KW-1003">Cell membrane</keyword>
<keyword id="KW-0139">CF(1)</keyword>
<keyword id="KW-0375">Hydrogen ion transport</keyword>
<keyword id="KW-0406">Ion transport</keyword>
<keyword id="KW-0472">Membrane</keyword>
<keyword id="KW-0813">Transport</keyword>
<protein>
    <recommendedName>
        <fullName evidence="1">ATP synthase subunit delta</fullName>
    </recommendedName>
    <alternativeName>
        <fullName evidence="1">ATP synthase F(1) sector subunit delta</fullName>
    </alternativeName>
    <alternativeName>
        <fullName evidence="1">F-type ATPase subunit delta</fullName>
        <shortName evidence="1">F-ATPase subunit delta</shortName>
    </alternativeName>
</protein>